<feature type="chain" id="PRO_1000001457" description="Holliday junction branch migration complex subunit RuvB">
    <location>
        <begin position="1"/>
        <end position="358"/>
    </location>
</feature>
<feature type="region of interest" description="Disordered" evidence="2">
    <location>
        <begin position="1"/>
        <end position="24"/>
    </location>
</feature>
<feature type="region of interest" description="Large ATPase domain (RuvB-L)" evidence="1">
    <location>
        <begin position="5"/>
        <end position="194"/>
    </location>
</feature>
<feature type="region of interest" description="Small ATPAse domain (RuvB-S)" evidence="1">
    <location>
        <begin position="195"/>
        <end position="265"/>
    </location>
</feature>
<feature type="region of interest" description="Head domain (RuvB-H)" evidence="1">
    <location>
        <begin position="268"/>
        <end position="358"/>
    </location>
</feature>
<feature type="binding site" evidence="1">
    <location>
        <position position="33"/>
    </location>
    <ligand>
        <name>ATP</name>
        <dbReference type="ChEBI" id="CHEBI:30616"/>
    </ligand>
</feature>
<feature type="binding site" evidence="1">
    <location>
        <position position="34"/>
    </location>
    <ligand>
        <name>ATP</name>
        <dbReference type="ChEBI" id="CHEBI:30616"/>
    </ligand>
</feature>
<feature type="binding site" evidence="1">
    <location>
        <position position="75"/>
    </location>
    <ligand>
        <name>ATP</name>
        <dbReference type="ChEBI" id="CHEBI:30616"/>
    </ligand>
</feature>
<feature type="binding site" evidence="1">
    <location>
        <position position="78"/>
    </location>
    <ligand>
        <name>ATP</name>
        <dbReference type="ChEBI" id="CHEBI:30616"/>
    </ligand>
</feature>
<feature type="binding site" evidence="1">
    <location>
        <position position="79"/>
    </location>
    <ligand>
        <name>ATP</name>
        <dbReference type="ChEBI" id="CHEBI:30616"/>
    </ligand>
</feature>
<feature type="binding site" evidence="1">
    <location>
        <position position="79"/>
    </location>
    <ligand>
        <name>Mg(2+)</name>
        <dbReference type="ChEBI" id="CHEBI:18420"/>
    </ligand>
</feature>
<feature type="binding site" evidence="1">
    <location>
        <position position="80"/>
    </location>
    <ligand>
        <name>ATP</name>
        <dbReference type="ChEBI" id="CHEBI:30616"/>
    </ligand>
</feature>
<feature type="binding site" evidence="1">
    <location>
        <begin position="141"/>
        <end position="143"/>
    </location>
    <ligand>
        <name>ATP</name>
        <dbReference type="ChEBI" id="CHEBI:30616"/>
    </ligand>
</feature>
<feature type="binding site" evidence="1">
    <location>
        <position position="184"/>
    </location>
    <ligand>
        <name>ATP</name>
        <dbReference type="ChEBI" id="CHEBI:30616"/>
    </ligand>
</feature>
<feature type="binding site" evidence="1">
    <location>
        <position position="194"/>
    </location>
    <ligand>
        <name>ATP</name>
        <dbReference type="ChEBI" id="CHEBI:30616"/>
    </ligand>
</feature>
<feature type="binding site" evidence="1">
    <location>
        <position position="231"/>
    </location>
    <ligand>
        <name>ATP</name>
        <dbReference type="ChEBI" id="CHEBI:30616"/>
    </ligand>
</feature>
<feature type="binding site" evidence="1">
    <location>
        <position position="304"/>
    </location>
    <ligand>
        <name>DNA</name>
        <dbReference type="ChEBI" id="CHEBI:16991"/>
    </ligand>
</feature>
<feature type="binding site" evidence="1">
    <location>
        <position position="323"/>
    </location>
    <ligand>
        <name>DNA</name>
        <dbReference type="ChEBI" id="CHEBI:16991"/>
    </ligand>
</feature>
<feature type="binding site" evidence="1">
    <location>
        <position position="328"/>
    </location>
    <ligand>
        <name>DNA</name>
        <dbReference type="ChEBI" id="CHEBI:16991"/>
    </ligand>
</feature>
<reference key="1">
    <citation type="submission" date="2006-02" db="EMBL/GenBank/DDBJ databases">
        <title>Complete sequence of chromosome of Rhodoferax ferrireducens DSM 15236.</title>
        <authorList>
            <person name="Copeland A."/>
            <person name="Lucas S."/>
            <person name="Lapidus A."/>
            <person name="Barry K."/>
            <person name="Detter J.C."/>
            <person name="Glavina del Rio T."/>
            <person name="Hammon N."/>
            <person name="Israni S."/>
            <person name="Pitluck S."/>
            <person name="Brettin T."/>
            <person name="Bruce D."/>
            <person name="Han C."/>
            <person name="Tapia R."/>
            <person name="Gilna P."/>
            <person name="Kiss H."/>
            <person name="Schmutz J."/>
            <person name="Larimer F."/>
            <person name="Land M."/>
            <person name="Kyrpides N."/>
            <person name="Ivanova N."/>
            <person name="Richardson P."/>
        </authorList>
    </citation>
    <scope>NUCLEOTIDE SEQUENCE [LARGE SCALE GENOMIC DNA]</scope>
    <source>
        <strain>ATCC BAA-621 / DSM 15236 / T118</strain>
    </source>
</reference>
<dbReference type="EC" id="3.6.4.-" evidence="1"/>
<dbReference type="EMBL" id="CP000267">
    <property type="protein sequence ID" value="ABD68570.1"/>
    <property type="molecule type" value="Genomic_DNA"/>
</dbReference>
<dbReference type="RefSeq" id="WP_011463143.1">
    <property type="nucleotide sequence ID" value="NC_007908.1"/>
</dbReference>
<dbReference type="SMR" id="Q220I3"/>
<dbReference type="STRING" id="338969.Rfer_0820"/>
<dbReference type="KEGG" id="rfr:Rfer_0820"/>
<dbReference type="eggNOG" id="COG2255">
    <property type="taxonomic scope" value="Bacteria"/>
</dbReference>
<dbReference type="HOGENOM" id="CLU_055599_1_0_4"/>
<dbReference type="OrthoDB" id="9804478at2"/>
<dbReference type="Proteomes" id="UP000008332">
    <property type="component" value="Chromosome"/>
</dbReference>
<dbReference type="GO" id="GO:0005737">
    <property type="term" value="C:cytoplasm"/>
    <property type="evidence" value="ECO:0007669"/>
    <property type="project" value="UniProtKB-SubCell"/>
</dbReference>
<dbReference type="GO" id="GO:0048476">
    <property type="term" value="C:Holliday junction resolvase complex"/>
    <property type="evidence" value="ECO:0007669"/>
    <property type="project" value="UniProtKB-UniRule"/>
</dbReference>
<dbReference type="GO" id="GO:0005524">
    <property type="term" value="F:ATP binding"/>
    <property type="evidence" value="ECO:0007669"/>
    <property type="project" value="UniProtKB-UniRule"/>
</dbReference>
<dbReference type="GO" id="GO:0016887">
    <property type="term" value="F:ATP hydrolysis activity"/>
    <property type="evidence" value="ECO:0007669"/>
    <property type="project" value="InterPro"/>
</dbReference>
<dbReference type="GO" id="GO:0000400">
    <property type="term" value="F:four-way junction DNA binding"/>
    <property type="evidence" value="ECO:0007669"/>
    <property type="project" value="UniProtKB-UniRule"/>
</dbReference>
<dbReference type="GO" id="GO:0009378">
    <property type="term" value="F:four-way junction helicase activity"/>
    <property type="evidence" value="ECO:0007669"/>
    <property type="project" value="InterPro"/>
</dbReference>
<dbReference type="GO" id="GO:0006310">
    <property type="term" value="P:DNA recombination"/>
    <property type="evidence" value="ECO:0007669"/>
    <property type="project" value="UniProtKB-UniRule"/>
</dbReference>
<dbReference type="GO" id="GO:0006281">
    <property type="term" value="P:DNA repair"/>
    <property type="evidence" value="ECO:0007669"/>
    <property type="project" value="UniProtKB-UniRule"/>
</dbReference>
<dbReference type="CDD" id="cd00009">
    <property type="entry name" value="AAA"/>
    <property type="match status" value="1"/>
</dbReference>
<dbReference type="FunFam" id="1.10.10.10:FF:000086">
    <property type="entry name" value="Holliday junction ATP-dependent DNA helicase RuvB"/>
    <property type="match status" value="1"/>
</dbReference>
<dbReference type="FunFam" id="3.40.50.300:FF:000073">
    <property type="entry name" value="Holliday junction ATP-dependent DNA helicase RuvB"/>
    <property type="match status" value="1"/>
</dbReference>
<dbReference type="Gene3D" id="1.10.8.60">
    <property type="match status" value="1"/>
</dbReference>
<dbReference type="Gene3D" id="3.40.50.300">
    <property type="entry name" value="P-loop containing nucleotide triphosphate hydrolases"/>
    <property type="match status" value="1"/>
</dbReference>
<dbReference type="Gene3D" id="1.10.10.10">
    <property type="entry name" value="Winged helix-like DNA-binding domain superfamily/Winged helix DNA-binding domain"/>
    <property type="match status" value="1"/>
</dbReference>
<dbReference type="HAMAP" id="MF_00016">
    <property type="entry name" value="DNA_HJ_migration_RuvB"/>
    <property type="match status" value="1"/>
</dbReference>
<dbReference type="InterPro" id="IPR003593">
    <property type="entry name" value="AAA+_ATPase"/>
</dbReference>
<dbReference type="InterPro" id="IPR041445">
    <property type="entry name" value="AAA_lid_4"/>
</dbReference>
<dbReference type="InterPro" id="IPR004605">
    <property type="entry name" value="DNA_helicase_Holl-junc_RuvB"/>
</dbReference>
<dbReference type="InterPro" id="IPR027417">
    <property type="entry name" value="P-loop_NTPase"/>
</dbReference>
<dbReference type="InterPro" id="IPR008824">
    <property type="entry name" value="RuvB-like_N"/>
</dbReference>
<dbReference type="InterPro" id="IPR008823">
    <property type="entry name" value="RuvB_C"/>
</dbReference>
<dbReference type="InterPro" id="IPR036388">
    <property type="entry name" value="WH-like_DNA-bd_sf"/>
</dbReference>
<dbReference type="InterPro" id="IPR036390">
    <property type="entry name" value="WH_DNA-bd_sf"/>
</dbReference>
<dbReference type="NCBIfam" id="NF000868">
    <property type="entry name" value="PRK00080.1"/>
    <property type="match status" value="1"/>
</dbReference>
<dbReference type="NCBIfam" id="TIGR00635">
    <property type="entry name" value="ruvB"/>
    <property type="match status" value="1"/>
</dbReference>
<dbReference type="PANTHER" id="PTHR42848">
    <property type="match status" value="1"/>
</dbReference>
<dbReference type="PANTHER" id="PTHR42848:SF1">
    <property type="entry name" value="HOLLIDAY JUNCTION BRANCH MIGRATION COMPLEX SUBUNIT RUVB"/>
    <property type="match status" value="1"/>
</dbReference>
<dbReference type="Pfam" id="PF17864">
    <property type="entry name" value="AAA_lid_4"/>
    <property type="match status" value="1"/>
</dbReference>
<dbReference type="Pfam" id="PF05491">
    <property type="entry name" value="RuvB_C"/>
    <property type="match status" value="1"/>
</dbReference>
<dbReference type="Pfam" id="PF05496">
    <property type="entry name" value="RuvB_N"/>
    <property type="match status" value="1"/>
</dbReference>
<dbReference type="SMART" id="SM00382">
    <property type="entry name" value="AAA"/>
    <property type="match status" value="1"/>
</dbReference>
<dbReference type="SUPFAM" id="SSF52540">
    <property type="entry name" value="P-loop containing nucleoside triphosphate hydrolases"/>
    <property type="match status" value="1"/>
</dbReference>
<dbReference type="SUPFAM" id="SSF46785">
    <property type="entry name" value="Winged helix' DNA-binding domain"/>
    <property type="match status" value="1"/>
</dbReference>
<protein>
    <recommendedName>
        <fullName evidence="1">Holliday junction branch migration complex subunit RuvB</fullName>
        <ecNumber evidence="1">3.6.4.-</ecNumber>
    </recommendedName>
</protein>
<proteinExistence type="inferred from homology"/>
<evidence type="ECO:0000255" key="1">
    <source>
        <dbReference type="HAMAP-Rule" id="MF_00016"/>
    </source>
</evidence>
<evidence type="ECO:0000256" key="2">
    <source>
        <dbReference type="SAM" id="MobiDB-lite"/>
    </source>
</evidence>
<name>RUVB_ALBFT</name>
<accession>Q220I3</accession>
<organism>
    <name type="scientific">Albidiferax ferrireducens (strain ATCC BAA-621 / DSM 15236 / T118)</name>
    <name type="common">Rhodoferax ferrireducens</name>
    <dbReference type="NCBI Taxonomy" id="338969"/>
    <lineage>
        <taxon>Bacteria</taxon>
        <taxon>Pseudomonadati</taxon>
        <taxon>Pseudomonadota</taxon>
        <taxon>Betaproteobacteria</taxon>
        <taxon>Burkholderiales</taxon>
        <taxon>Comamonadaceae</taxon>
        <taxon>Rhodoferax</taxon>
    </lineage>
</organism>
<gene>
    <name evidence="1" type="primary">ruvB</name>
    <name type="ordered locus">Rfer_0820</name>
</gene>
<comment type="function">
    <text evidence="1">The RuvA-RuvB-RuvC complex processes Holliday junction (HJ) DNA during genetic recombination and DNA repair, while the RuvA-RuvB complex plays an important role in the rescue of blocked DNA replication forks via replication fork reversal (RFR). RuvA specifically binds to HJ cruciform DNA, conferring on it an open structure. The RuvB hexamer acts as an ATP-dependent pump, pulling dsDNA into and through the RuvAB complex. RuvB forms 2 homohexamers on either side of HJ DNA bound by 1 or 2 RuvA tetramers; 4 subunits per hexamer contact DNA at a time. Coordinated motions by a converter formed by DNA-disengaged RuvB subunits stimulates ATP hydrolysis and nucleotide exchange. Immobilization of the converter enables RuvB to convert the ATP-contained energy into a lever motion, pulling 2 nucleotides of DNA out of the RuvA tetramer per ATP hydrolyzed, thus driving DNA branch migration. The RuvB motors rotate together with the DNA substrate, which together with the progressing nucleotide cycle form the mechanistic basis for DNA recombination by continuous HJ branch migration. Branch migration allows RuvC to scan DNA until it finds its consensus sequence, where it cleaves and resolves cruciform DNA.</text>
</comment>
<comment type="catalytic activity">
    <reaction evidence="1">
        <text>ATP + H2O = ADP + phosphate + H(+)</text>
        <dbReference type="Rhea" id="RHEA:13065"/>
        <dbReference type="ChEBI" id="CHEBI:15377"/>
        <dbReference type="ChEBI" id="CHEBI:15378"/>
        <dbReference type="ChEBI" id="CHEBI:30616"/>
        <dbReference type="ChEBI" id="CHEBI:43474"/>
        <dbReference type="ChEBI" id="CHEBI:456216"/>
    </reaction>
</comment>
<comment type="subunit">
    <text evidence="1">Homohexamer. Forms an RuvA(8)-RuvB(12)-Holliday junction (HJ) complex. HJ DNA is sandwiched between 2 RuvA tetramers; dsDNA enters through RuvA and exits via RuvB. An RuvB hexamer assembles on each DNA strand where it exits the tetramer. Each RuvB hexamer is contacted by two RuvA subunits (via domain III) on 2 adjacent RuvB subunits; this complex drives branch migration. In the full resolvosome a probable DNA-RuvA(4)-RuvB(12)-RuvC(2) complex forms which resolves the HJ.</text>
</comment>
<comment type="subcellular location">
    <subcellularLocation>
        <location evidence="1">Cytoplasm</location>
    </subcellularLocation>
</comment>
<comment type="domain">
    <text evidence="1">Has 3 domains, the large (RuvB-L) and small ATPase (RuvB-S) domains and the C-terminal head (RuvB-H) domain. The head domain binds DNA, while the ATPase domains jointly bind ATP, ADP or are empty depending on the state of the subunit in the translocation cycle. During a single DNA translocation step the structure of each domain remains the same, but their relative positions change.</text>
</comment>
<comment type="similarity">
    <text evidence="1">Belongs to the RuvB family.</text>
</comment>
<keyword id="KW-0067">ATP-binding</keyword>
<keyword id="KW-0963">Cytoplasm</keyword>
<keyword id="KW-0227">DNA damage</keyword>
<keyword id="KW-0233">DNA recombination</keyword>
<keyword id="KW-0234">DNA repair</keyword>
<keyword id="KW-0238">DNA-binding</keyword>
<keyword id="KW-0378">Hydrolase</keyword>
<keyword id="KW-0547">Nucleotide-binding</keyword>
<keyword id="KW-1185">Reference proteome</keyword>
<sequence length="358" mass="39427">MSIQTDDFAAPPPKRILSGAPASPNEEAVERALRPKLLDEYVGQAKVREQLEIFISAARMRDEALDHVLLFGPPGLGKTTLSHIIAHELGVNLRQTSGPVLEKPKDLAALLTNLEKNDVLFIDEIHRLSPVVEEILYPALEDYKIDIMIGEGPAARSIKLDLQPFTLIGATTRAGMLTNPLRDRFGIVARLEFYSPEELASIVRRSAGLLKVPTDEKGGFEIARRSRGTPRIANRLLRRVRDYADVKGAGEITLDIAHRALVMLDVDPQGFDLMDRKLLEAVIHRFDGGPVGLDNIAASIGEERETIEDVIEPYLIQQGYLQRTPRGRIATLAAYKHLGVTPPAAQSGGDMFGAMRPE</sequence>